<name>IF4A_WHEAT</name>
<sequence>MAGMAPEGSQFDAKNYDSKMQELLSQGETEEFFTSYDEVHESFDDMGLQENLLRGIYAYGFEKPSAIQQRGIVPFCKGLDVIQQAQSGTGKTATFCSGILQQLDYGLVECQALVLAPTRELAQQIEKVMRALGDYLGVKVHACVGGTSVREDQRILASGVHVVVGTPGRVFDIVRRQSLRPDNIKMFVLDEADEMLSRGFKDQIYDIFQLLPGKIQVGVFSATMPPEALEITRKFMNKPVRILVKRDELTLEGIKQFYVNVEKEEWKLDTLCDLYETLAITQSVIFVNTRRKVDWLTDKMRGRDHTVSATHGDMDQNTRDIIMREFRSGSSRVLITTDLLARGIDVQQVSLVINYDLPTQPENYQHRIGRSGRFGRKGVAINFVTREDERMLFDIQKFYNVVIEELPANVADLL</sequence>
<keyword id="KW-0067">ATP-binding</keyword>
<keyword id="KW-0347">Helicase</keyword>
<keyword id="KW-0378">Hydrolase</keyword>
<keyword id="KW-0396">Initiation factor</keyword>
<keyword id="KW-0547">Nucleotide-binding</keyword>
<keyword id="KW-0648">Protein biosynthesis</keyword>
<keyword id="KW-1185">Reference proteome</keyword>
<keyword id="KW-0694">RNA-binding</keyword>
<evidence type="ECO:0000250" key="1"/>
<evidence type="ECO:0000255" key="2">
    <source>
        <dbReference type="PROSITE-ProRule" id="PRU00541"/>
    </source>
</evidence>
<evidence type="ECO:0000255" key="3">
    <source>
        <dbReference type="PROSITE-ProRule" id="PRU00542"/>
    </source>
</evidence>
<evidence type="ECO:0000305" key="4"/>
<comment type="function">
    <text>ATP-dependent RNA helicase which is a subunit of the eIF4F complex involved in cap recognition and is required for mRNA binding to ribosome. In the current model of translation initiation, eIF4A unwinds RNA secondary structures in the 5'-UTR of mRNAs which is necessary to allow efficient binding of the small ribosomal subunit, and subsequent scanning for the initiator codon.</text>
</comment>
<comment type="catalytic activity">
    <reaction>
        <text>ATP + H2O = ADP + phosphate + H(+)</text>
        <dbReference type="Rhea" id="RHEA:13065"/>
        <dbReference type="ChEBI" id="CHEBI:15377"/>
        <dbReference type="ChEBI" id="CHEBI:15378"/>
        <dbReference type="ChEBI" id="CHEBI:30616"/>
        <dbReference type="ChEBI" id="CHEBI:43474"/>
        <dbReference type="ChEBI" id="CHEBI:456216"/>
        <dbReference type="EC" id="3.6.4.13"/>
    </reaction>
</comment>
<comment type="subunit">
    <text evidence="1">eIF4F is a multi-subunit complex, the composition of which varies with external and internal environmental conditions. It is composed of at least EIF4A, EIF4E and EIF4G (By similarity).</text>
</comment>
<comment type="similarity">
    <text evidence="4">Belongs to the DEAD box helicase family. eIF4A subfamily.</text>
</comment>
<feature type="chain" id="PRO_0000054964" description="Eukaryotic initiation factor 4A">
    <location>
        <begin position="1"/>
        <end position="414"/>
    </location>
</feature>
<feature type="domain" description="Helicase ATP-binding" evidence="2">
    <location>
        <begin position="72"/>
        <end position="242"/>
    </location>
</feature>
<feature type="domain" description="Helicase C-terminal" evidence="3">
    <location>
        <begin position="253"/>
        <end position="414"/>
    </location>
</feature>
<feature type="short sequence motif" description="Q motif">
    <location>
        <begin position="41"/>
        <end position="69"/>
    </location>
</feature>
<feature type="short sequence motif" description="DEAD box">
    <location>
        <begin position="190"/>
        <end position="193"/>
    </location>
</feature>
<feature type="binding site" evidence="2">
    <location>
        <begin position="85"/>
        <end position="92"/>
    </location>
    <ligand>
        <name>ATP</name>
        <dbReference type="ChEBI" id="CHEBI:30616"/>
    </ligand>
</feature>
<accession>P41378</accession>
<protein>
    <recommendedName>
        <fullName>Eukaryotic initiation factor 4A</fullName>
        <shortName>eIF-4A</shortName>
        <ecNumber>3.6.4.13</ecNumber>
    </recommendedName>
    <alternativeName>
        <fullName>ATP-dependent RNA helicase eIF4A</fullName>
    </alternativeName>
</protein>
<dbReference type="EC" id="3.6.4.13"/>
<dbReference type="EMBL" id="Z21510">
    <property type="status" value="NOT_ANNOTATED_CDS"/>
    <property type="molecule type" value="mRNA"/>
</dbReference>
<dbReference type="PIR" id="JN0839">
    <property type="entry name" value="JN0839"/>
</dbReference>
<dbReference type="SMR" id="P41378"/>
<dbReference type="STRING" id="4565.P41378"/>
<dbReference type="ChEMBL" id="CHEMBL3308965"/>
<dbReference type="PaxDb" id="4565-Traes_7DL_6AC3E4622.2"/>
<dbReference type="eggNOG" id="KOG0327">
    <property type="taxonomic scope" value="Eukaryota"/>
</dbReference>
<dbReference type="Proteomes" id="UP000019116">
    <property type="component" value="Unplaced"/>
</dbReference>
<dbReference type="ExpressionAtlas" id="P41378">
    <property type="expression patterns" value="baseline and differential"/>
</dbReference>
<dbReference type="GO" id="GO:0010494">
    <property type="term" value="C:cytoplasmic stress granule"/>
    <property type="evidence" value="ECO:0000318"/>
    <property type="project" value="GO_Central"/>
</dbReference>
<dbReference type="GO" id="GO:0005524">
    <property type="term" value="F:ATP binding"/>
    <property type="evidence" value="ECO:0007669"/>
    <property type="project" value="UniProtKB-KW"/>
</dbReference>
<dbReference type="GO" id="GO:0016887">
    <property type="term" value="F:ATP hydrolysis activity"/>
    <property type="evidence" value="ECO:0007669"/>
    <property type="project" value="RHEA"/>
</dbReference>
<dbReference type="GO" id="GO:0003723">
    <property type="term" value="F:RNA binding"/>
    <property type="evidence" value="ECO:0007669"/>
    <property type="project" value="UniProtKB-KW"/>
</dbReference>
<dbReference type="GO" id="GO:0003724">
    <property type="term" value="F:RNA helicase activity"/>
    <property type="evidence" value="ECO:0007669"/>
    <property type="project" value="UniProtKB-EC"/>
</dbReference>
<dbReference type="GO" id="GO:0003743">
    <property type="term" value="F:translation initiation factor activity"/>
    <property type="evidence" value="ECO:0000318"/>
    <property type="project" value="GO_Central"/>
</dbReference>
<dbReference type="GO" id="GO:0002183">
    <property type="term" value="P:cytoplasmic translational initiation"/>
    <property type="evidence" value="ECO:0000318"/>
    <property type="project" value="GO_Central"/>
</dbReference>
<dbReference type="CDD" id="cd17939">
    <property type="entry name" value="DEADc_EIF4A"/>
    <property type="match status" value="1"/>
</dbReference>
<dbReference type="CDD" id="cd18787">
    <property type="entry name" value="SF2_C_DEAD"/>
    <property type="match status" value="1"/>
</dbReference>
<dbReference type="FunFam" id="3.40.50.300:FF:000089">
    <property type="entry name" value="Eukaryotic initiation factor 4A-II"/>
    <property type="match status" value="1"/>
</dbReference>
<dbReference type="FunFam" id="3.40.50.300:FF:000031">
    <property type="entry name" value="Eukaryotic initiation factor 4A-III"/>
    <property type="match status" value="1"/>
</dbReference>
<dbReference type="Gene3D" id="3.40.50.300">
    <property type="entry name" value="P-loop containing nucleotide triphosphate hydrolases"/>
    <property type="match status" value="2"/>
</dbReference>
<dbReference type="InterPro" id="IPR011545">
    <property type="entry name" value="DEAD/DEAH_box_helicase_dom"/>
</dbReference>
<dbReference type="InterPro" id="IPR014001">
    <property type="entry name" value="Helicase_ATP-bd"/>
</dbReference>
<dbReference type="InterPro" id="IPR001650">
    <property type="entry name" value="Helicase_C-like"/>
</dbReference>
<dbReference type="InterPro" id="IPR027417">
    <property type="entry name" value="P-loop_NTPase"/>
</dbReference>
<dbReference type="InterPro" id="IPR000629">
    <property type="entry name" value="RNA-helicase_DEAD-box_CS"/>
</dbReference>
<dbReference type="InterPro" id="IPR014014">
    <property type="entry name" value="RNA_helicase_DEAD_Q_motif"/>
</dbReference>
<dbReference type="PANTHER" id="PTHR47958">
    <property type="entry name" value="ATP-DEPENDENT RNA HELICASE DBP3"/>
    <property type="match status" value="1"/>
</dbReference>
<dbReference type="Pfam" id="PF00270">
    <property type="entry name" value="DEAD"/>
    <property type="match status" value="1"/>
</dbReference>
<dbReference type="Pfam" id="PF00271">
    <property type="entry name" value="Helicase_C"/>
    <property type="match status" value="1"/>
</dbReference>
<dbReference type="SMART" id="SM00487">
    <property type="entry name" value="DEXDc"/>
    <property type="match status" value="1"/>
</dbReference>
<dbReference type="SMART" id="SM00490">
    <property type="entry name" value="HELICc"/>
    <property type="match status" value="1"/>
</dbReference>
<dbReference type="SUPFAM" id="SSF52540">
    <property type="entry name" value="P-loop containing nucleoside triphosphate hydrolases"/>
    <property type="match status" value="1"/>
</dbReference>
<dbReference type="PROSITE" id="PS00039">
    <property type="entry name" value="DEAD_ATP_HELICASE"/>
    <property type="match status" value="1"/>
</dbReference>
<dbReference type="PROSITE" id="PS51192">
    <property type="entry name" value="HELICASE_ATP_BIND_1"/>
    <property type="match status" value="1"/>
</dbReference>
<dbReference type="PROSITE" id="PS51194">
    <property type="entry name" value="HELICASE_CTER"/>
    <property type="match status" value="1"/>
</dbReference>
<dbReference type="PROSITE" id="PS51195">
    <property type="entry name" value="Q_MOTIF"/>
    <property type="match status" value="1"/>
</dbReference>
<reference key="1">
    <citation type="journal article" date="1993" name="Gene">
        <title>Sequence of a cDNA encoding wheat eukaryotic protein synthesis initiation factor 4A.</title>
        <authorList>
            <person name="Metz A.M."/>
            <person name="Browning K.S."/>
        </authorList>
    </citation>
    <scope>NUCLEOTIDE SEQUENCE [MRNA]</scope>
</reference>
<proteinExistence type="evidence at transcript level"/>
<organism>
    <name type="scientific">Triticum aestivum</name>
    <name type="common">Wheat</name>
    <dbReference type="NCBI Taxonomy" id="4565"/>
    <lineage>
        <taxon>Eukaryota</taxon>
        <taxon>Viridiplantae</taxon>
        <taxon>Streptophyta</taxon>
        <taxon>Embryophyta</taxon>
        <taxon>Tracheophyta</taxon>
        <taxon>Spermatophyta</taxon>
        <taxon>Magnoliopsida</taxon>
        <taxon>Liliopsida</taxon>
        <taxon>Poales</taxon>
        <taxon>Poaceae</taxon>
        <taxon>BOP clade</taxon>
        <taxon>Pooideae</taxon>
        <taxon>Triticodae</taxon>
        <taxon>Triticeae</taxon>
        <taxon>Triticinae</taxon>
        <taxon>Triticum</taxon>
    </lineage>
</organism>